<keyword id="KW-0046">Antibiotic resistance</keyword>
<keyword id="KW-0067">ATP-binding</keyword>
<keyword id="KW-0963">Cytoplasm</keyword>
<keyword id="KW-0238">DNA-binding</keyword>
<keyword id="KW-0413">Isomerase</keyword>
<keyword id="KW-0460">Magnesium</keyword>
<keyword id="KW-0479">Metal-binding</keyword>
<keyword id="KW-0547">Nucleotide-binding</keyword>
<keyword id="KW-1185">Reference proteome</keyword>
<keyword id="KW-0799">Topoisomerase</keyword>
<reference key="1">
    <citation type="journal article" date="1995" name="J. Bacteriol.">
        <title>Ser-127-to-Leu substitution in the DNA gyrase B subunit of Streptococcus pneumoniae is implicated in novobiocin resistance.</title>
        <authorList>
            <person name="Munoz R."/>
            <person name="Bustamante M."/>
            <person name="de la Campa A.G."/>
        </authorList>
    </citation>
    <scope>NUCLEOTIDE SEQUENCE [GENOMIC DNA]</scope>
    <source>
        <strain>533</strain>
    </source>
</reference>
<reference key="2">
    <citation type="journal article" date="2001" name="Science">
        <title>Complete genome sequence of a virulent isolate of Streptococcus pneumoniae.</title>
        <authorList>
            <person name="Tettelin H."/>
            <person name="Nelson K.E."/>
            <person name="Paulsen I.T."/>
            <person name="Eisen J.A."/>
            <person name="Read T.D."/>
            <person name="Peterson S.N."/>
            <person name="Heidelberg J.F."/>
            <person name="DeBoy R.T."/>
            <person name="Haft D.H."/>
            <person name="Dodson R.J."/>
            <person name="Durkin A.S."/>
            <person name="Gwinn M.L."/>
            <person name="Kolonay J.F."/>
            <person name="Nelson W.C."/>
            <person name="Peterson J.D."/>
            <person name="Umayam L.A."/>
            <person name="White O."/>
            <person name="Salzberg S.L."/>
            <person name="Lewis M.R."/>
            <person name="Radune D."/>
            <person name="Holtzapple E.K."/>
            <person name="Khouri H.M."/>
            <person name="Wolf A.M."/>
            <person name="Utterback T.R."/>
            <person name="Hansen C.L."/>
            <person name="McDonald L.A."/>
            <person name="Feldblyum T.V."/>
            <person name="Angiuoli S.V."/>
            <person name="Dickinson T."/>
            <person name="Hickey E.K."/>
            <person name="Holt I.E."/>
            <person name="Loftus B.J."/>
            <person name="Yang F."/>
            <person name="Smith H.O."/>
            <person name="Venter J.C."/>
            <person name="Dougherty B.A."/>
            <person name="Morrison D.A."/>
            <person name="Hollingshead S.K."/>
            <person name="Fraser C.M."/>
        </authorList>
    </citation>
    <scope>NUCLEOTIDE SEQUENCE [LARGE SCALE GENOMIC DNA]</scope>
    <source>
        <strain>ATCC BAA-334 / TIGR4</strain>
    </source>
</reference>
<organism>
    <name type="scientific">Streptococcus pneumoniae serotype 4 (strain ATCC BAA-334 / TIGR4)</name>
    <dbReference type="NCBI Taxonomy" id="170187"/>
    <lineage>
        <taxon>Bacteria</taxon>
        <taxon>Bacillati</taxon>
        <taxon>Bacillota</taxon>
        <taxon>Bacilli</taxon>
        <taxon>Lactobacillales</taxon>
        <taxon>Streptococcaceae</taxon>
        <taxon>Streptococcus</taxon>
    </lineage>
</organism>
<evidence type="ECO:0000255" key="1">
    <source>
        <dbReference type="HAMAP-Rule" id="MF_01898"/>
    </source>
</evidence>
<evidence type="ECO:0000305" key="2"/>
<name>GYRB_STRPN</name>
<accession>P0A4L9</accession>
<accession>P48373</accession>
<feature type="chain" id="PRO_0000145347" description="DNA gyrase subunit B">
    <location>
        <begin position="1"/>
        <end position="648"/>
    </location>
</feature>
<feature type="domain" description="Toprim" evidence="1">
    <location>
        <begin position="427"/>
        <end position="541"/>
    </location>
</feature>
<feature type="binding site" evidence="1">
    <location>
        <position position="433"/>
    </location>
    <ligand>
        <name>Mg(2+)</name>
        <dbReference type="ChEBI" id="CHEBI:18420"/>
        <label>1</label>
        <note>catalytic</note>
    </ligand>
</feature>
<feature type="binding site" evidence="1">
    <location>
        <position position="506"/>
    </location>
    <ligand>
        <name>Mg(2+)</name>
        <dbReference type="ChEBI" id="CHEBI:18420"/>
        <label>1</label>
        <note>catalytic</note>
    </ligand>
</feature>
<feature type="binding site" evidence="1">
    <location>
        <position position="506"/>
    </location>
    <ligand>
        <name>Mg(2+)</name>
        <dbReference type="ChEBI" id="CHEBI:18420"/>
        <label>2</label>
    </ligand>
</feature>
<feature type="binding site" evidence="1">
    <location>
        <position position="508"/>
    </location>
    <ligand>
        <name>Mg(2+)</name>
        <dbReference type="ChEBI" id="CHEBI:18420"/>
        <label>2</label>
    </ligand>
</feature>
<feature type="site" description="Interaction with DNA" evidence="1">
    <location>
        <position position="458"/>
    </location>
</feature>
<feature type="site" description="Interaction with DNA" evidence="1">
    <location>
        <position position="461"/>
    </location>
</feature>
<feature type="sequence variant" description="Confers novobiocin resistance.">
    <original>S</original>
    <variation>L</variation>
    <location>
        <position position="127"/>
    </location>
</feature>
<feature type="sequence conflict" description="In Ref. 1; CAA58771." evidence="2" ref="1">
    <original>D</original>
    <variation>G</variation>
    <location>
        <position position="88"/>
    </location>
</feature>
<feature type="sequence conflict" description="In Ref. 1; CAA58771." evidence="2" ref="1">
    <original>A</original>
    <variation>S</variation>
    <location>
        <position position="107"/>
    </location>
</feature>
<feature type="sequence conflict" description="In Ref. 1; CAA58771." evidence="2" ref="1">
    <original>D</original>
    <variation>S</variation>
    <location>
        <position position="304"/>
    </location>
</feature>
<proteinExistence type="inferred from homology"/>
<gene>
    <name evidence="1" type="primary">gyrB</name>
    <name type="ordered locus">SP_0806</name>
</gene>
<dbReference type="EC" id="5.6.2.2" evidence="1"/>
<dbReference type="EMBL" id="X83917">
    <property type="protein sequence ID" value="CAA58771.1"/>
    <property type="molecule type" value="Genomic_DNA"/>
</dbReference>
<dbReference type="EMBL" id="AE005672">
    <property type="protein sequence ID" value="AAK74943.1"/>
    <property type="molecule type" value="Genomic_DNA"/>
</dbReference>
<dbReference type="PIR" id="F95093">
    <property type="entry name" value="F95093"/>
</dbReference>
<dbReference type="RefSeq" id="WP_000134039.1">
    <property type="nucleotide sequence ID" value="NZ_CP155539.1"/>
</dbReference>
<dbReference type="SMR" id="P0A4L9"/>
<dbReference type="BindingDB" id="P0A4L9"/>
<dbReference type="ChEMBL" id="CHEMBL1075021"/>
<dbReference type="DrugBank" id="DB01044">
    <property type="generic name" value="Gatifloxacin"/>
</dbReference>
<dbReference type="DrugCentral" id="P0A4L9"/>
<dbReference type="PaxDb" id="170187-SP_0806"/>
<dbReference type="EnsemblBacteria" id="AAK74943">
    <property type="protein sequence ID" value="AAK74943"/>
    <property type="gene ID" value="SP_0806"/>
</dbReference>
<dbReference type="KEGG" id="spn:SP_0806"/>
<dbReference type="eggNOG" id="COG0187">
    <property type="taxonomic scope" value="Bacteria"/>
</dbReference>
<dbReference type="PhylomeDB" id="P0A4L9"/>
<dbReference type="BioCyc" id="SPNE170187:G1FZB-825-MONOMER"/>
<dbReference type="PRO" id="PR:P0A4L9"/>
<dbReference type="Proteomes" id="UP000000585">
    <property type="component" value="Chromosome"/>
</dbReference>
<dbReference type="GO" id="GO:0005694">
    <property type="term" value="C:chromosome"/>
    <property type="evidence" value="ECO:0007669"/>
    <property type="project" value="InterPro"/>
</dbReference>
<dbReference type="GO" id="GO:0005737">
    <property type="term" value="C:cytoplasm"/>
    <property type="evidence" value="ECO:0007669"/>
    <property type="project" value="UniProtKB-SubCell"/>
</dbReference>
<dbReference type="GO" id="GO:0005524">
    <property type="term" value="F:ATP binding"/>
    <property type="evidence" value="ECO:0007669"/>
    <property type="project" value="UniProtKB-UniRule"/>
</dbReference>
<dbReference type="GO" id="GO:0003677">
    <property type="term" value="F:DNA binding"/>
    <property type="evidence" value="ECO:0007669"/>
    <property type="project" value="UniProtKB-KW"/>
</dbReference>
<dbReference type="GO" id="GO:0034335">
    <property type="term" value="F:DNA negative supercoiling activity"/>
    <property type="evidence" value="ECO:0007669"/>
    <property type="project" value="UniProtKB-ARBA"/>
</dbReference>
<dbReference type="GO" id="GO:0046872">
    <property type="term" value="F:metal ion binding"/>
    <property type="evidence" value="ECO:0007669"/>
    <property type="project" value="UniProtKB-KW"/>
</dbReference>
<dbReference type="GO" id="GO:0006265">
    <property type="term" value="P:DNA topological change"/>
    <property type="evidence" value="ECO:0007669"/>
    <property type="project" value="UniProtKB-UniRule"/>
</dbReference>
<dbReference type="GO" id="GO:0006261">
    <property type="term" value="P:DNA-templated DNA replication"/>
    <property type="evidence" value="ECO:0007669"/>
    <property type="project" value="UniProtKB-UniRule"/>
</dbReference>
<dbReference type="GO" id="GO:0046677">
    <property type="term" value="P:response to antibiotic"/>
    <property type="evidence" value="ECO:0007669"/>
    <property type="project" value="UniProtKB-KW"/>
</dbReference>
<dbReference type="CDD" id="cd16928">
    <property type="entry name" value="HATPase_GyrB-like"/>
    <property type="match status" value="1"/>
</dbReference>
<dbReference type="CDD" id="cd00822">
    <property type="entry name" value="TopoII_Trans_DNA_gyrase"/>
    <property type="match status" value="1"/>
</dbReference>
<dbReference type="CDD" id="cd03366">
    <property type="entry name" value="TOPRIM_TopoIIA_GyrB"/>
    <property type="match status" value="1"/>
</dbReference>
<dbReference type="FunFam" id="3.30.230.10:FF:000005">
    <property type="entry name" value="DNA gyrase subunit B"/>
    <property type="match status" value="1"/>
</dbReference>
<dbReference type="FunFam" id="3.30.565.10:FF:000002">
    <property type="entry name" value="DNA gyrase subunit B"/>
    <property type="match status" value="1"/>
</dbReference>
<dbReference type="FunFam" id="3.40.50.670:FF:000002">
    <property type="entry name" value="DNA gyrase subunit B"/>
    <property type="match status" value="1"/>
</dbReference>
<dbReference type="Gene3D" id="3.30.230.10">
    <property type="match status" value="1"/>
</dbReference>
<dbReference type="Gene3D" id="3.40.50.670">
    <property type="match status" value="1"/>
</dbReference>
<dbReference type="Gene3D" id="3.30.565.10">
    <property type="entry name" value="Histidine kinase-like ATPase, C-terminal domain"/>
    <property type="match status" value="1"/>
</dbReference>
<dbReference type="HAMAP" id="MF_01898">
    <property type="entry name" value="GyrB"/>
    <property type="match status" value="1"/>
</dbReference>
<dbReference type="InterPro" id="IPR002288">
    <property type="entry name" value="DNA_gyrase_B_C"/>
</dbReference>
<dbReference type="InterPro" id="IPR011557">
    <property type="entry name" value="GyrB"/>
</dbReference>
<dbReference type="InterPro" id="IPR036890">
    <property type="entry name" value="HATPase_C_sf"/>
</dbReference>
<dbReference type="InterPro" id="IPR020568">
    <property type="entry name" value="Ribosomal_Su5_D2-typ_SF"/>
</dbReference>
<dbReference type="InterPro" id="IPR014721">
    <property type="entry name" value="Ribsml_uS5_D2-typ_fold_subgr"/>
</dbReference>
<dbReference type="InterPro" id="IPR001241">
    <property type="entry name" value="Topo_IIA"/>
</dbReference>
<dbReference type="InterPro" id="IPR013760">
    <property type="entry name" value="Topo_IIA-like_dom_sf"/>
</dbReference>
<dbReference type="InterPro" id="IPR000565">
    <property type="entry name" value="Topo_IIA_B"/>
</dbReference>
<dbReference type="InterPro" id="IPR013759">
    <property type="entry name" value="Topo_IIA_B_C"/>
</dbReference>
<dbReference type="InterPro" id="IPR013506">
    <property type="entry name" value="Topo_IIA_bsu_dom2"/>
</dbReference>
<dbReference type="InterPro" id="IPR018522">
    <property type="entry name" value="TopoIIA_CS"/>
</dbReference>
<dbReference type="InterPro" id="IPR006171">
    <property type="entry name" value="TOPRIM_dom"/>
</dbReference>
<dbReference type="InterPro" id="IPR034160">
    <property type="entry name" value="TOPRIM_GyrB"/>
</dbReference>
<dbReference type="NCBIfam" id="TIGR01059">
    <property type="entry name" value="gyrB"/>
    <property type="match status" value="1"/>
</dbReference>
<dbReference type="NCBIfam" id="NF004189">
    <property type="entry name" value="PRK05644.1"/>
    <property type="match status" value="1"/>
</dbReference>
<dbReference type="NCBIfam" id="NF011501">
    <property type="entry name" value="PRK14939.1"/>
    <property type="match status" value="1"/>
</dbReference>
<dbReference type="PANTHER" id="PTHR45866:SF1">
    <property type="entry name" value="DNA GYRASE SUBUNIT B, MITOCHONDRIAL"/>
    <property type="match status" value="1"/>
</dbReference>
<dbReference type="PANTHER" id="PTHR45866">
    <property type="entry name" value="DNA GYRASE/TOPOISOMERASE SUBUNIT B"/>
    <property type="match status" value="1"/>
</dbReference>
<dbReference type="Pfam" id="PF00204">
    <property type="entry name" value="DNA_gyraseB"/>
    <property type="match status" value="1"/>
</dbReference>
<dbReference type="Pfam" id="PF00986">
    <property type="entry name" value="DNA_gyraseB_C"/>
    <property type="match status" value="1"/>
</dbReference>
<dbReference type="Pfam" id="PF02518">
    <property type="entry name" value="HATPase_c"/>
    <property type="match status" value="1"/>
</dbReference>
<dbReference type="Pfam" id="PF01751">
    <property type="entry name" value="Toprim"/>
    <property type="match status" value="1"/>
</dbReference>
<dbReference type="PRINTS" id="PR01159">
    <property type="entry name" value="DNAGYRASEB"/>
</dbReference>
<dbReference type="PRINTS" id="PR00418">
    <property type="entry name" value="TPI2FAMILY"/>
</dbReference>
<dbReference type="SMART" id="SM00387">
    <property type="entry name" value="HATPase_c"/>
    <property type="match status" value="1"/>
</dbReference>
<dbReference type="SMART" id="SM00433">
    <property type="entry name" value="TOP2c"/>
    <property type="match status" value="1"/>
</dbReference>
<dbReference type="SUPFAM" id="SSF55874">
    <property type="entry name" value="ATPase domain of HSP90 chaperone/DNA topoisomerase II/histidine kinase"/>
    <property type="match status" value="1"/>
</dbReference>
<dbReference type="SUPFAM" id="SSF54211">
    <property type="entry name" value="Ribosomal protein S5 domain 2-like"/>
    <property type="match status" value="1"/>
</dbReference>
<dbReference type="SUPFAM" id="SSF56719">
    <property type="entry name" value="Type II DNA topoisomerase"/>
    <property type="match status" value="1"/>
</dbReference>
<dbReference type="PROSITE" id="PS00177">
    <property type="entry name" value="TOPOISOMERASE_II"/>
    <property type="match status" value="1"/>
</dbReference>
<dbReference type="PROSITE" id="PS50880">
    <property type="entry name" value="TOPRIM"/>
    <property type="match status" value="1"/>
</dbReference>
<sequence>MTEEIKNLQAQDYDASQIQVLEGLEAVRMRPGMYIGSTSKEGLHHLVWEIVDNSIDEALAGFASHIQVFIEPDDSITVVDDGRGIPVDIQEKTGRPAVETVFTVLHAGGKFGGGGYKVSGGLHGVGSSVVNALSTQLDVHVHKNGKIHYQEYRRGHVVADLEIVGDTDKTGTTVHFTPDPKIFTETTIFDFDKLNKRIQELAFLNRGLQISITDKRQGLEQTKHYHYEGGIASYVEYINENKDVIFDTPIYTDGEMDDITVEVAMQYTTGYHENVMSFANNIHTHEGGTHEQGFRTALTRVINDYARKNKLLKDNEDNLTGEDVREGLTAVISVKHPNPQFEGQTKTKLGNSEVVKITNRLFSEAFSDFLMENPQIAKRIVEKGILAAKARVAAKRAREVTRKKSGLEISNLPGKLADCSSNNPAETELFIVEGDSAGGSAKSGRNREFQAILPIRGKILNVEKASMDKILANEEIRSLFTAMGTGFGAEFDVSKARYQKLVLMTDADVDGAHIRTLLLTLIYRYMKPILEAGYVYIAQPPIYGVKVGSEIKEYIQPGADQEIKLQEALARYSEGRTKPTIQRYKGLGEMDDHQLWETTMDPEHRLMARVSVDDAAEADKIFDMLMGDRVEPRREFIEENAVYSTLDV</sequence>
<protein>
    <recommendedName>
        <fullName evidence="1">DNA gyrase subunit B</fullName>
        <ecNumber evidence="1">5.6.2.2</ecNumber>
    </recommendedName>
</protein>
<comment type="function">
    <text evidence="1">A type II topoisomerase that negatively supercoils closed circular double-stranded (ds) DNA in an ATP-dependent manner to modulate DNA topology and maintain chromosomes in an underwound state. Negative supercoiling favors strand separation, and DNA replication, transcription, recombination and repair, all of which involve strand separation. Also able to catalyze the interconversion of other topological isomers of dsDNA rings, including catenanes and knotted rings. Type II topoisomerases break and join 2 DNA strands simultaneously in an ATP-dependent manner.</text>
</comment>
<comment type="catalytic activity">
    <reaction evidence="1">
        <text>ATP-dependent breakage, passage and rejoining of double-stranded DNA.</text>
        <dbReference type="EC" id="5.6.2.2"/>
    </reaction>
</comment>
<comment type="cofactor">
    <cofactor evidence="1">
        <name>Mg(2+)</name>
        <dbReference type="ChEBI" id="CHEBI:18420"/>
    </cofactor>
    <cofactor evidence="1">
        <name>Mn(2+)</name>
        <dbReference type="ChEBI" id="CHEBI:29035"/>
    </cofactor>
    <cofactor evidence="1">
        <name>Ca(2+)</name>
        <dbReference type="ChEBI" id="CHEBI:29108"/>
    </cofactor>
    <text evidence="1">Binds two Mg(2+) per subunit. The magnesium ions form salt bridges with both the protein and the DNA. Can also accept other divalent metal cations, such as Mn(2+) or Ca(2+).</text>
</comment>
<comment type="subunit">
    <text evidence="1">Heterotetramer, composed of two GyrA and two GyrB chains. In the heterotetramer, GyrA contains the active site tyrosine that forms a transient covalent intermediate with DNA, while GyrB binds cofactors and catalyzes ATP hydrolysis.</text>
</comment>
<comment type="subcellular location">
    <subcellularLocation>
        <location evidence="1">Cytoplasm</location>
    </subcellularLocation>
</comment>
<comment type="miscellaneous">
    <text evidence="1">Few gyrases are as efficient as E.coli at forming negative supercoils. Not all organisms have 2 type II topoisomerases; in organisms with a single type II topoisomerase this enzyme also has to decatenate newly replicated chromosomes.</text>
</comment>
<comment type="similarity">
    <text evidence="1">Belongs to the type II topoisomerase GyrB family.</text>
</comment>